<comment type="function">
    <text evidence="1">Part of the Tol-Pal system, which plays a role in outer membrane invagination during cell division and is important for maintaining outer membrane integrity.</text>
</comment>
<comment type="subunit">
    <text evidence="1">The Tol-Pal system is composed of five core proteins: the inner membrane proteins TolA, TolQ and TolR, the periplasmic protein TolB and the outer membrane protein Pal. They form a network linking the inner and outer membranes and the peptidoglycan layer.</text>
</comment>
<comment type="subcellular location">
    <subcellularLocation>
        <location evidence="1">Periplasm</location>
    </subcellularLocation>
</comment>
<comment type="similarity">
    <text evidence="1">Belongs to the TolB family.</text>
</comment>
<keyword id="KW-0131">Cell cycle</keyword>
<keyword id="KW-0132">Cell division</keyword>
<keyword id="KW-0574">Periplasm</keyword>
<keyword id="KW-1185">Reference proteome</keyword>
<keyword id="KW-0732">Signal</keyword>
<accession>A3MZ21</accession>
<protein>
    <recommendedName>
        <fullName evidence="1">Tol-Pal system protein TolB</fullName>
    </recommendedName>
</protein>
<sequence>MKLKSRFTSIIGVITLFFSQTVTAESDVVISVDEGVSMAQPIAVVPFKANGGVPADVGQIIADDLRNSGKFTPVERSKLPAQPGSAAEVNSQQWTDIGVDSVVVGQVTPTGGGYNVAYQLVDTLSNPATVLAQGAFNVPAAQIRQGAHTVSDQVFEKITQIRGAFRTKIAYVVQRGVSSYELRVSDYDGYNAFTVVKSKEPLMSPEWSPDGSRLAYVTFENKKAQVVVHDLRSGSRRVVAALRGHNGAPAFSPDGSRIAFASNQDGELDIYVVGANGGKPSKLTANAGNNTEPSWSPDGSTIYFTSDRAGSPQVYRMGSSGGGASPMGGSGSYNAKVSSDGKNLIMIAGDKVVKRDLASGGTEVLSSTFLDESPSISPNGIMVIYSSTKGTSKVLQLVSADGRFKANLPGAGGQFKFPAWSPYLTK</sequence>
<feature type="signal peptide" evidence="1">
    <location>
        <begin position="1"/>
        <end position="24"/>
    </location>
</feature>
<feature type="chain" id="PRO_1000026698" description="Tol-Pal system protein TolB" evidence="1">
    <location>
        <begin position="25"/>
        <end position="426"/>
    </location>
</feature>
<proteinExistence type="inferred from homology"/>
<evidence type="ECO:0000255" key="1">
    <source>
        <dbReference type="HAMAP-Rule" id="MF_00671"/>
    </source>
</evidence>
<gene>
    <name evidence="1" type="primary">tolB</name>
    <name type="ordered locus">APL_0303</name>
</gene>
<name>TOLB_ACTP2</name>
<reference key="1">
    <citation type="journal article" date="2008" name="J. Bacteriol.">
        <title>The complete genome sequence of Actinobacillus pleuropneumoniae L20 (serotype 5b).</title>
        <authorList>
            <person name="Foote S.J."/>
            <person name="Bosse J.T."/>
            <person name="Bouevitch A.B."/>
            <person name="Langford P.R."/>
            <person name="Young N.M."/>
            <person name="Nash J.H.E."/>
        </authorList>
    </citation>
    <scope>NUCLEOTIDE SEQUENCE [LARGE SCALE GENOMIC DNA]</scope>
    <source>
        <strain>L20</strain>
    </source>
</reference>
<organism>
    <name type="scientific">Actinobacillus pleuropneumoniae serotype 5b (strain L20)</name>
    <dbReference type="NCBI Taxonomy" id="416269"/>
    <lineage>
        <taxon>Bacteria</taxon>
        <taxon>Pseudomonadati</taxon>
        <taxon>Pseudomonadota</taxon>
        <taxon>Gammaproteobacteria</taxon>
        <taxon>Pasteurellales</taxon>
        <taxon>Pasteurellaceae</taxon>
        <taxon>Actinobacillus</taxon>
    </lineage>
</organism>
<dbReference type="EMBL" id="CP000569">
    <property type="protein sequence ID" value="ABN73407.1"/>
    <property type="molecule type" value="Genomic_DNA"/>
</dbReference>
<dbReference type="RefSeq" id="WP_005596216.1">
    <property type="nucleotide sequence ID" value="NC_009053.1"/>
</dbReference>
<dbReference type="SMR" id="A3MZ21"/>
<dbReference type="STRING" id="416269.APL_0303"/>
<dbReference type="EnsemblBacteria" id="ABN73407">
    <property type="protein sequence ID" value="ABN73407"/>
    <property type="gene ID" value="APL_0303"/>
</dbReference>
<dbReference type="GeneID" id="48598456"/>
<dbReference type="KEGG" id="apl:APL_0303"/>
<dbReference type="eggNOG" id="COG0823">
    <property type="taxonomic scope" value="Bacteria"/>
</dbReference>
<dbReference type="HOGENOM" id="CLU_047123_0_0_6"/>
<dbReference type="Proteomes" id="UP000001432">
    <property type="component" value="Chromosome"/>
</dbReference>
<dbReference type="GO" id="GO:0042597">
    <property type="term" value="C:periplasmic space"/>
    <property type="evidence" value="ECO:0007669"/>
    <property type="project" value="UniProtKB-SubCell"/>
</dbReference>
<dbReference type="GO" id="GO:0051301">
    <property type="term" value="P:cell division"/>
    <property type="evidence" value="ECO:0007669"/>
    <property type="project" value="UniProtKB-UniRule"/>
</dbReference>
<dbReference type="GO" id="GO:0017038">
    <property type="term" value="P:protein import"/>
    <property type="evidence" value="ECO:0007669"/>
    <property type="project" value="InterPro"/>
</dbReference>
<dbReference type="Gene3D" id="2.120.10.30">
    <property type="entry name" value="TolB, C-terminal domain"/>
    <property type="match status" value="1"/>
</dbReference>
<dbReference type="Gene3D" id="3.40.50.10070">
    <property type="entry name" value="TolB, N-terminal domain"/>
    <property type="match status" value="1"/>
</dbReference>
<dbReference type="HAMAP" id="MF_00671">
    <property type="entry name" value="TolB"/>
    <property type="match status" value="1"/>
</dbReference>
<dbReference type="InterPro" id="IPR011042">
    <property type="entry name" value="6-blade_b-propeller_TolB-like"/>
</dbReference>
<dbReference type="InterPro" id="IPR011659">
    <property type="entry name" value="PD40"/>
</dbReference>
<dbReference type="InterPro" id="IPR014167">
    <property type="entry name" value="Tol-Pal_TolB"/>
</dbReference>
<dbReference type="InterPro" id="IPR007195">
    <property type="entry name" value="TolB_N"/>
</dbReference>
<dbReference type="NCBIfam" id="TIGR02800">
    <property type="entry name" value="propeller_TolB"/>
    <property type="match status" value="1"/>
</dbReference>
<dbReference type="PANTHER" id="PTHR36842:SF1">
    <property type="entry name" value="PROTEIN TOLB"/>
    <property type="match status" value="1"/>
</dbReference>
<dbReference type="PANTHER" id="PTHR36842">
    <property type="entry name" value="PROTEIN TOLB HOMOLOG"/>
    <property type="match status" value="1"/>
</dbReference>
<dbReference type="Pfam" id="PF07676">
    <property type="entry name" value="PD40"/>
    <property type="match status" value="4"/>
</dbReference>
<dbReference type="Pfam" id="PF04052">
    <property type="entry name" value="TolB_N"/>
    <property type="match status" value="1"/>
</dbReference>
<dbReference type="SUPFAM" id="SSF52964">
    <property type="entry name" value="TolB, N-terminal domain"/>
    <property type="match status" value="1"/>
</dbReference>
<dbReference type="SUPFAM" id="SSF69304">
    <property type="entry name" value="Tricorn protease N-terminal domain"/>
    <property type="match status" value="1"/>
</dbReference>